<organism>
    <name type="scientific">Dinoroseobacter shibae (strain DSM 16493 / NCIMB 14021 / DFL 12)</name>
    <dbReference type="NCBI Taxonomy" id="398580"/>
    <lineage>
        <taxon>Bacteria</taxon>
        <taxon>Pseudomonadati</taxon>
        <taxon>Pseudomonadota</taxon>
        <taxon>Alphaproteobacteria</taxon>
        <taxon>Rhodobacterales</taxon>
        <taxon>Roseobacteraceae</taxon>
        <taxon>Dinoroseobacter</taxon>
    </lineage>
</organism>
<comment type="function">
    <text evidence="1">DNA-dependent RNA polymerase catalyzes the transcription of DNA into RNA using the four ribonucleoside triphosphates as substrates.</text>
</comment>
<comment type="catalytic activity">
    <reaction evidence="1">
        <text>RNA(n) + a ribonucleoside 5'-triphosphate = RNA(n+1) + diphosphate</text>
        <dbReference type="Rhea" id="RHEA:21248"/>
        <dbReference type="Rhea" id="RHEA-COMP:14527"/>
        <dbReference type="Rhea" id="RHEA-COMP:17342"/>
        <dbReference type="ChEBI" id="CHEBI:33019"/>
        <dbReference type="ChEBI" id="CHEBI:61557"/>
        <dbReference type="ChEBI" id="CHEBI:140395"/>
        <dbReference type="EC" id="2.7.7.6"/>
    </reaction>
</comment>
<comment type="subunit">
    <text evidence="1">The RNAP catalytic core consists of 2 alpha, 1 beta, 1 beta' and 1 omega subunit. When a sigma factor is associated with the core the holoenzyme is formed, which can initiate transcription.</text>
</comment>
<comment type="similarity">
    <text evidence="1">Belongs to the RNA polymerase beta chain family.</text>
</comment>
<accession>A8LM40</accession>
<name>RPOB_DINSH</name>
<feature type="chain" id="PRO_1000086368" description="DNA-directed RNA polymerase subunit beta">
    <location>
        <begin position="1"/>
        <end position="1378"/>
    </location>
</feature>
<dbReference type="EC" id="2.7.7.6" evidence="1"/>
<dbReference type="EMBL" id="CP000830">
    <property type="protein sequence ID" value="ABV92017.1"/>
    <property type="molecule type" value="Genomic_DNA"/>
</dbReference>
<dbReference type="RefSeq" id="WP_012176950.1">
    <property type="nucleotide sequence ID" value="NC_009952.1"/>
</dbReference>
<dbReference type="SMR" id="A8LM40"/>
<dbReference type="STRING" id="398580.Dshi_0268"/>
<dbReference type="KEGG" id="dsh:Dshi_0268"/>
<dbReference type="eggNOG" id="COG0085">
    <property type="taxonomic scope" value="Bacteria"/>
</dbReference>
<dbReference type="HOGENOM" id="CLU_000524_4_0_5"/>
<dbReference type="OrthoDB" id="9803954at2"/>
<dbReference type="Proteomes" id="UP000006833">
    <property type="component" value="Chromosome"/>
</dbReference>
<dbReference type="GO" id="GO:0000428">
    <property type="term" value="C:DNA-directed RNA polymerase complex"/>
    <property type="evidence" value="ECO:0007669"/>
    <property type="project" value="UniProtKB-KW"/>
</dbReference>
<dbReference type="GO" id="GO:0003677">
    <property type="term" value="F:DNA binding"/>
    <property type="evidence" value="ECO:0007669"/>
    <property type="project" value="UniProtKB-UniRule"/>
</dbReference>
<dbReference type="GO" id="GO:0003899">
    <property type="term" value="F:DNA-directed RNA polymerase activity"/>
    <property type="evidence" value="ECO:0007669"/>
    <property type="project" value="UniProtKB-UniRule"/>
</dbReference>
<dbReference type="GO" id="GO:0032549">
    <property type="term" value="F:ribonucleoside binding"/>
    <property type="evidence" value="ECO:0007669"/>
    <property type="project" value="InterPro"/>
</dbReference>
<dbReference type="GO" id="GO:0006351">
    <property type="term" value="P:DNA-templated transcription"/>
    <property type="evidence" value="ECO:0007669"/>
    <property type="project" value="UniProtKB-UniRule"/>
</dbReference>
<dbReference type="CDD" id="cd00653">
    <property type="entry name" value="RNA_pol_B_RPB2"/>
    <property type="match status" value="1"/>
</dbReference>
<dbReference type="FunFam" id="2.40.50.100:FF:000006">
    <property type="entry name" value="DNA-directed RNA polymerase subunit beta"/>
    <property type="match status" value="1"/>
</dbReference>
<dbReference type="FunFam" id="3.90.1800.10:FF:000001">
    <property type="entry name" value="DNA-directed RNA polymerase subunit beta"/>
    <property type="match status" value="1"/>
</dbReference>
<dbReference type="Gene3D" id="2.40.50.100">
    <property type="match status" value="1"/>
</dbReference>
<dbReference type="Gene3D" id="2.40.50.150">
    <property type="match status" value="1"/>
</dbReference>
<dbReference type="Gene3D" id="3.90.1100.10">
    <property type="match status" value="2"/>
</dbReference>
<dbReference type="Gene3D" id="2.30.150.10">
    <property type="entry name" value="DNA-directed RNA polymerase, beta subunit, external 1 domain"/>
    <property type="match status" value="1"/>
</dbReference>
<dbReference type="Gene3D" id="2.40.270.10">
    <property type="entry name" value="DNA-directed RNA polymerase, subunit 2, domain 6"/>
    <property type="match status" value="1"/>
</dbReference>
<dbReference type="Gene3D" id="3.90.1800.10">
    <property type="entry name" value="RNA polymerase alpha subunit dimerisation domain"/>
    <property type="match status" value="1"/>
</dbReference>
<dbReference type="Gene3D" id="3.90.1110.10">
    <property type="entry name" value="RNA polymerase Rpb2, domain 2"/>
    <property type="match status" value="1"/>
</dbReference>
<dbReference type="HAMAP" id="MF_01321">
    <property type="entry name" value="RNApol_bact_RpoB"/>
    <property type="match status" value="1"/>
</dbReference>
<dbReference type="InterPro" id="IPR042107">
    <property type="entry name" value="DNA-dir_RNA_pol_bsu_ext_1_sf"/>
</dbReference>
<dbReference type="InterPro" id="IPR019462">
    <property type="entry name" value="DNA-dir_RNA_pol_bsu_external_1"/>
</dbReference>
<dbReference type="InterPro" id="IPR015712">
    <property type="entry name" value="DNA-dir_RNA_pol_su2"/>
</dbReference>
<dbReference type="InterPro" id="IPR007120">
    <property type="entry name" value="DNA-dir_RNAP_su2_dom"/>
</dbReference>
<dbReference type="InterPro" id="IPR037033">
    <property type="entry name" value="DNA-dir_RNAP_su2_hyb_sf"/>
</dbReference>
<dbReference type="InterPro" id="IPR010243">
    <property type="entry name" value="RNA_pol_bsu_bac"/>
</dbReference>
<dbReference type="InterPro" id="IPR007121">
    <property type="entry name" value="RNA_pol_bsu_CS"/>
</dbReference>
<dbReference type="InterPro" id="IPR007644">
    <property type="entry name" value="RNA_pol_bsu_protrusion"/>
</dbReference>
<dbReference type="InterPro" id="IPR007642">
    <property type="entry name" value="RNA_pol_Rpb2_2"/>
</dbReference>
<dbReference type="InterPro" id="IPR037034">
    <property type="entry name" value="RNA_pol_Rpb2_2_sf"/>
</dbReference>
<dbReference type="InterPro" id="IPR007645">
    <property type="entry name" value="RNA_pol_Rpb2_3"/>
</dbReference>
<dbReference type="InterPro" id="IPR007641">
    <property type="entry name" value="RNA_pol_Rpb2_7"/>
</dbReference>
<dbReference type="InterPro" id="IPR014724">
    <property type="entry name" value="RNA_pol_RPB2_OB-fold"/>
</dbReference>
<dbReference type="NCBIfam" id="NF001616">
    <property type="entry name" value="PRK00405.1"/>
    <property type="match status" value="1"/>
</dbReference>
<dbReference type="NCBIfam" id="TIGR02013">
    <property type="entry name" value="rpoB"/>
    <property type="match status" value="1"/>
</dbReference>
<dbReference type="PANTHER" id="PTHR20856">
    <property type="entry name" value="DNA-DIRECTED RNA POLYMERASE I SUBUNIT 2"/>
    <property type="match status" value="1"/>
</dbReference>
<dbReference type="Pfam" id="PF04563">
    <property type="entry name" value="RNA_pol_Rpb2_1"/>
    <property type="match status" value="1"/>
</dbReference>
<dbReference type="Pfam" id="PF04561">
    <property type="entry name" value="RNA_pol_Rpb2_2"/>
    <property type="match status" value="2"/>
</dbReference>
<dbReference type="Pfam" id="PF04565">
    <property type="entry name" value="RNA_pol_Rpb2_3"/>
    <property type="match status" value="1"/>
</dbReference>
<dbReference type="Pfam" id="PF10385">
    <property type="entry name" value="RNA_pol_Rpb2_45"/>
    <property type="match status" value="1"/>
</dbReference>
<dbReference type="Pfam" id="PF00562">
    <property type="entry name" value="RNA_pol_Rpb2_6"/>
    <property type="match status" value="1"/>
</dbReference>
<dbReference type="Pfam" id="PF04560">
    <property type="entry name" value="RNA_pol_Rpb2_7"/>
    <property type="match status" value="1"/>
</dbReference>
<dbReference type="SUPFAM" id="SSF64484">
    <property type="entry name" value="beta and beta-prime subunits of DNA dependent RNA-polymerase"/>
    <property type="match status" value="1"/>
</dbReference>
<dbReference type="PROSITE" id="PS01166">
    <property type="entry name" value="RNA_POL_BETA"/>
    <property type="match status" value="1"/>
</dbReference>
<gene>
    <name evidence="1" type="primary">rpoB</name>
    <name type="ordered locus">Dshi_0268</name>
</gene>
<evidence type="ECO:0000255" key="1">
    <source>
        <dbReference type="HAMAP-Rule" id="MF_01321"/>
    </source>
</evidence>
<reference key="1">
    <citation type="journal article" date="2010" name="ISME J.">
        <title>The complete genome sequence of the algal symbiont Dinoroseobacter shibae: a hitchhiker's guide to life in the sea.</title>
        <authorList>
            <person name="Wagner-Dobler I."/>
            <person name="Ballhausen B."/>
            <person name="Berger M."/>
            <person name="Brinkhoff T."/>
            <person name="Buchholz I."/>
            <person name="Bunk B."/>
            <person name="Cypionka H."/>
            <person name="Daniel R."/>
            <person name="Drepper T."/>
            <person name="Gerdts G."/>
            <person name="Hahnke S."/>
            <person name="Han C."/>
            <person name="Jahn D."/>
            <person name="Kalhoefer D."/>
            <person name="Kiss H."/>
            <person name="Klenk H.P."/>
            <person name="Kyrpides N."/>
            <person name="Liebl W."/>
            <person name="Liesegang H."/>
            <person name="Meincke L."/>
            <person name="Pati A."/>
            <person name="Petersen J."/>
            <person name="Piekarski T."/>
            <person name="Pommerenke C."/>
            <person name="Pradella S."/>
            <person name="Pukall R."/>
            <person name="Rabus R."/>
            <person name="Stackebrandt E."/>
            <person name="Thole S."/>
            <person name="Thompson L."/>
            <person name="Tielen P."/>
            <person name="Tomasch J."/>
            <person name="von Jan M."/>
            <person name="Wanphrut N."/>
            <person name="Wichels A."/>
            <person name="Zech H."/>
            <person name="Simon M."/>
        </authorList>
    </citation>
    <scope>NUCLEOTIDE SEQUENCE [LARGE SCALE GENOMIC DNA]</scope>
    <source>
        <strain>DSM 16493 / NCIMB 14021 / DFL 12</strain>
    </source>
</reference>
<proteinExistence type="inferred from homology"/>
<sequence>MAQTVLGQKRFRKYYGKIREVLEMPNLIEVQKSSYDLFLKSGDQPQPMDGEGIMGVFQSVFPIKDFNETAVLEFVKYELEKPKYDVEECQQRDMTYSAPLKVTLRLIVFDVDEDTGAKSVKDIKEQDVFMGDMPLMTPNGTFIVNGTERVIVSQMHRSPGVFFDHDKGKTHSSGKLLFACRIIPYRGSWLDFEFDAKDLVFARIDRRRKLPVTTLLYSLGMDQQDIMDAYYDTVTYTHRKGEGWVTKFFPERIRGTRPTQDVVDAATGEVIAEAGKKVTPRAVKQLIDEGNVSEILVPFDGIIGKFAAKDIINEENGAIYVEAGDELTWEVDKDGAVTGGTLKELLDAGIEEIPVLDIDNITVGAYMRNTLAADKNMNRDTALMDIYRVMRPGEPPTVEAASALFDTLFFDSERYDLSAVGRVKMNMRLALDAEDTVRTLRKEDIVSCIKALVDLRDGRGDIDDIDHLGNRRVRSVGELMENQYRVGLLRMERAIKERMSSVEIDTVMPQDLINAKPAAAAVREFFGSSQLSQFMDQTNPLSEVTHKRRLSALGPGGLTRERAGFEVRDVHPTHYGRMCPIETPEGPNIGLINSLATFARVNKYGFIETPYRRVEDGKVTDEVNYMSATEEMRHTVAQANANLDESGSFVNEMVNTRQSGEYTLAPRESVDLIDVSPKQLVSVAASLIPFLENDDANRALMGSNMQRQAVPLLQADAPFVGTGIEGVVARDSGAAIMARRGGFIDQVDATRIVIRATEDLEPGDPGVDIYRLRKFQRSNQNTCINQRPLVKVGDKVGKDDVIADGPSTDLGELALGKNVVVAFMPWNGYNYEDSILISERVARDDVFTSIHIEEFEVAARDTKLGPEEITRDIPNVGEEALRNLDEAGIVYIGADVGPGDILVGKITPKGESPMTPEEKLLRAIFGEKASDVRDTSMRLPPGDFGTVVEVRVFNRHGVEKDERALQIEREEVESLARDRDDEMAILERNIYARLKDMILGKTAVKGPKGVKPGSEITEDLLGTLSRGQWWQLALEDEAEAQMVEALNQQYEAQKRALTARFEDKVEKVRRGDDLPPGVMKMVKVFIAVKRKLQPGDKMAGRHGNKGVISKVVPMEDMPFLADGTPVDFVLNPLGVPSRMNVGQILETHMGWAARGMGLKIDEALGEYRRSGDMTPVREAMRLAYGDEAYEEAISGLDQDDLLERAGNVTRGVPIATPVFDGAKEADVNDALTRAGFDTSGQSDLYDGRTGEKFARQVTVGVKYLLKLHHLVDDKIHARSTGPYSLVTQQPLGGKAQFGGQRFGEMEVWALEAYGAAYTLQEMLTVKSDDVAGRTKVYESIVKGEDNFEAGVPESFNVLVKEVRGLGLNMELLDAEGEE</sequence>
<protein>
    <recommendedName>
        <fullName evidence="1">DNA-directed RNA polymerase subunit beta</fullName>
        <shortName evidence="1">RNAP subunit beta</shortName>
        <ecNumber evidence="1">2.7.7.6</ecNumber>
    </recommendedName>
    <alternativeName>
        <fullName evidence="1">RNA polymerase subunit beta</fullName>
    </alternativeName>
    <alternativeName>
        <fullName evidence="1">Transcriptase subunit beta</fullName>
    </alternativeName>
</protein>
<keyword id="KW-0240">DNA-directed RNA polymerase</keyword>
<keyword id="KW-0548">Nucleotidyltransferase</keyword>
<keyword id="KW-1185">Reference proteome</keyword>
<keyword id="KW-0804">Transcription</keyword>
<keyword id="KW-0808">Transferase</keyword>